<keyword id="KW-0963">Cytoplasm</keyword>
<keyword id="KW-0489">Methyltransferase</keyword>
<keyword id="KW-0694">RNA-binding</keyword>
<keyword id="KW-0698">rRNA processing</keyword>
<keyword id="KW-0949">S-adenosyl-L-methionine</keyword>
<keyword id="KW-0808">Transferase</keyword>
<name>RSMA_STAAN</name>
<proteinExistence type="evidence at protein level"/>
<dbReference type="EC" id="2.1.1.182" evidence="1"/>
<dbReference type="EMBL" id="BA000018">
    <property type="protein sequence ID" value="BAB41681.1"/>
    <property type="molecule type" value="Genomic_DNA"/>
</dbReference>
<dbReference type="PIR" id="F89815">
    <property type="entry name" value="F89815"/>
</dbReference>
<dbReference type="RefSeq" id="WP_000886500.1">
    <property type="nucleotide sequence ID" value="NC_002745.2"/>
</dbReference>
<dbReference type="SMR" id="P66662"/>
<dbReference type="EnsemblBacteria" id="BAB41681">
    <property type="protein sequence ID" value="BAB41681"/>
    <property type="gene ID" value="BAB41681"/>
</dbReference>
<dbReference type="KEGG" id="sau:SA0451"/>
<dbReference type="HOGENOM" id="CLU_041220_0_0_9"/>
<dbReference type="GO" id="GO:0005829">
    <property type="term" value="C:cytosol"/>
    <property type="evidence" value="ECO:0007669"/>
    <property type="project" value="TreeGrafter"/>
</dbReference>
<dbReference type="GO" id="GO:0052908">
    <property type="term" value="F:16S rRNA (adenine(1518)-N(6)/adenine(1519)-N(6))-dimethyltransferase activity"/>
    <property type="evidence" value="ECO:0007669"/>
    <property type="project" value="UniProtKB-EC"/>
</dbReference>
<dbReference type="GO" id="GO:0003723">
    <property type="term" value="F:RNA binding"/>
    <property type="evidence" value="ECO:0007669"/>
    <property type="project" value="UniProtKB-KW"/>
</dbReference>
<dbReference type="CDD" id="cd02440">
    <property type="entry name" value="AdoMet_MTases"/>
    <property type="match status" value="1"/>
</dbReference>
<dbReference type="FunFam" id="1.10.8.100:FF:000002">
    <property type="entry name" value="Ribosomal RNA small subunit methyltransferase A"/>
    <property type="match status" value="1"/>
</dbReference>
<dbReference type="FunFam" id="3.40.50.150:FF:000023">
    <property type="entry name" value="Ribosomal RNA small subunit methyltransferase A"/>
    <property type="match status" value="1"/>
</dbReference>
<dbReference type="Gene3D" id="1.10.8.100">
    <property type="entry name" value="Ribosomal RNA adenine dimethylase-like, domain 2"/>
    <property type="match status" value="1"/>
</dbReference>
<dbReference type="Gene3D" id="3.40.50.150">
    <property type="entry name" value="Vaccinia Virus protein VP39"/>
    <property type="match status" value="1"/>
</dbReference>
<dbReference type="HAMAP" id="MF_00607">
    <property type="entry name" value="16SrRNA_methyltr_A"/>
    <property type="match status" value="1"/>
</dbReference>
<dbReference type="InterPro" id="IPR001737">
    <property type="entry name" value="KsgA/Erm"/>
</dbReference>
<dbReference type="InterPro" id="IPR023165">
    <property type="entry name" value="rRNA_Ade_diMease-like_C"/>
</dbReference>
<dbReference type="InterPro" id="IPR020596">
    <property type="entry name" value="rRNA_Ade_Mease_Trfase_CS"/>
</dbReference>
<dbReference type="InterPro" id="IPR020598">
    <property type="entry name" value="rRNA_Ade_methylase_Trfase_N"/>
</dbReference>
<dbReference type="InterPro" id="IPR011530">
    <property type="entry name" value="rRNA_adenine_dimethylase"/>
</dbReference>
<dbReference type="InterPro" id="IPR029063">
    <property type="entry name" value="SAM-dependent_MTases_sf"/>
</dbReference>
<dbReference type="NCBIfam" id="TIGR00755">
    <property type="entry name" value="ksgA"/>
    <property type="match status" value="1"/>
</dbReference>
<dbReference type="PANTHER" id="PTHR11727">
    <property type="entry name" value="DIMETHYLADENOSINE TRANSFERASE"/>
    <property type="match status" value="1"/>
</dbReference>
<dbReference type="PANTHER" id="PTHR11727:SF7">
    <property type="entry name" value="DIMETHYLADENOSINE TRANSFERASE-RELATED"/>
    <property type="match status" value="1"/>
</dbReference>
<dbReference type="Pfam" id="PF00398">
    <property type="entry name" value="RrnaAD"/>
    <property type="match status" value="1"/>
</dbReference>
<dbReference type="SMART" id="SM00650">
    <property type="entry name" value="rADc"/>
    <property type="match status" value="1"/>
</dbReference>
<dbReference type="SUPFAM" id="SSF53335">
    <property type="entry name" value="S-adenosyl-L-methionine-dependent methyltransferases"/>
    <property type="match status" value="1"/>
</dbReference>
<dbReference type="PROSITE" id="PS01131">
    <property type="entry name" value="RRNA_A_DIMETH"/>
    <property type="match status" value="1"/>
</dbReference>
<dbReference type="PROSITE" id="PS51689">
    <property type="entry name" value="SAM_RNA_A_N6_MT"/>
    <property type="match status" value="1"/>
</dbReference>
<gene>
    <name evidence="1" type="primary">rsmA</name>
    <name evidence="1" type="synonym">ksgA</name>
    <name type="ordered locus">SA0451</name>
</gene>
<evidence type="ECO:0000255" key="1">
    <source>
        <dbReference type="HAMAP-Rule" id="MF_00607"/>
    </source>
</evidence>
<accession>P66662</accession>
<accession>Q99WB0</accession>
<organism>
    <name type="scientific">Staphylococcus aureus (strain N315)</name>
    <dbReference type="NCBI Taxonomy" id="158879"/>
    <lineage>
        <taxon>Bacteria</taxon>
        <taxon>Bacillati</taxon>
        <taxon>Bacillota</taxon>
        <taxon>Bacilli</taxon>
        <taxon>Bacillales</taxon>
        <taxon>Staphylococcaceae</taxon>
        <taxon>Staphylococcus</taxon>
    </lineage>
</organism>
<sequence>MLDNKDIATPSRTRALLDKYGFNFKKSLGQNFLIDVNIINNIIDASDIDAQTGVIEIGPGMGSLTEQLARHAKRVLAFEIDQRLIPVLNDTLSPYDNVTVINEDILKANIKEAVENHLQDCEKIMVVANLPYYITTPILLNLMQQDIPIDGYVVMMQKEVGERLNAEVGSKAYGSLSIVVQYYTETSKVLTVPKSVFMPPPNVDSIVVKLMQRTEPLVTVDNEEAFFKLAKAAFAQRRKTINNNYQNYFKDGKQHKEVILQWLEQAGIDPRRRGETLSIQDFAKLYEEKKKFPQLEN</sequence>
<feature type="chain" id="PRO_0000101605" description="Ribosomal RNA small subunit methyltransferase A">
    <location>
        <begin position="1"/>
        <end position="297"/>
    </location>
</feature>
<feature type="binding site" evidence="1">
    <location>
        <position position="31"/>
    </location>
    <ligand>
        <name>S-adenosyl-L-methionine</name>
        <dbReference type="ChEBI" id="CHEBI:59789"/>
    </ligand>
</feature>
<feature type="binding site" evidence="1">
    <location>
        <position position="33"/>
    </location>
    <ligand>
        <name>S-adenosyl-L-methionine</name>
        <dbReference type="ChEBI" id="CHEBI:59789"/>
    </ligand>
</feature>
<feature type="binding site" evidence="1">
    <location>
        <position position="58"/>
    </location>
    <ligand>
        <name>S-adenosyl-L-methionine</name>
        <dbReference type="ChEBI" id="CHEBI:59789"/>
    </ligand>
</feature>
<feature type="binding site" evidence="1">
    <location>
        <position position="79"/>
    </location>
    <ligand>
        <name>S-adenosyl-L-methionine</name>
        <dbReference type="ChEBI" id="CHEBI:59789"/>
    </ligand>
</feature>
<feature type="binding site" evidence="1">
    <location>
        <position position="104"/>
    </location>
    <ligand>
        <name>S-adenosyl-L-methionine</name>
        <dbReference type="ChEBI" id="CHEBI:59789"/>
    </ligand>
</feature>
<feature type="binding site" evidence="1">
    <location>
        <position position="129"/>
    </location>
    <ligand>
        <name>S-adenosyl-L-methionine</name>
        <dbReference type="ChEBI" id="CHEBI:59789"/>
    </ligand>
</feature>
<reference key="1">
    <citation type="journal article" date="2001" name="Lancet">
        <title>Whole genome sequencing of meticillin-resistant Staphylococcus aureus.</title>
        <authorList>
            <person name="Kuroda M."/>
            <person name="Ohta T."/>
            <person name="Uchiyama I."/>
            <person name="Baba T."/>
            <person name="Yuzawa H."/>
            <person name="Kobayashi I."/>
            <person name="Cui L."/>
            <person name="Oguchi A."/>
            <person name="Aoki K."/>
            <person name="Nagai Y."/>
            <person name="Lian J.-Q."/>
            <person name="Ito T."/>
            <person name="Kanamori M."/>
            <person name="Matsumaru H."/>
            <person name="Maruyama A."/>
            <person name="Murakami H."/>
            <person name="Hosoyama A."/>
            <person name="Mizutani-Ui Y."/>
            <person name="Takahashi N.K."/>
            <person name="Sawano T."/>
            <person name="Inoue R."/>
            <person name="Kaito C."/>
            <person name="Sekimizu K."/>
            <person name="Hirakawa H."/>
            <person name="Kuhara S."/>
            <person name="Goto S."/>
            <person name="Yabuzaki J."/>
            <person name="Kanehisa M."/>
            <person name="Yamashita A."/>
            <person name="Oshima K."/>
            <person name="Furuya K."/>
            <person name="Yoshino C."/>
            <person name="Shiba T."/>
            <person name="Hattori M."/>
            <person name="Ogasawara N."/>
            <person name="Hayashi H."/>
            <person name="Hiramatsu K."/>
        </authorList>
    </citation>
    <scope>NUCLEOTIDE SEQUENCE [LARGE SCALE GENOMIC DNA]</scope>
    <source>
        <strain>N315</strain>
    </source>
</reference>
<reference key="2">
    <citation type="submission" date="2007-10" db="UniProtKB">
        <title>Shotgun proteomic analysis of total and membrane protein extracts of S. aureus strain N315.</title>
        <authorList>
            <person name="Vaezzadeh A.R."/>
            <person name="Deshusses J."/>
            <person name="Lescuyer P."/>
            <person name="Hochstrasser D.F."/>
        </authorList>
    </citation>
    <scope>IDENTIFICATION BY MASS SPECTROMETRY [LARGE SCALE ANALYSIS]</scope>
    <source>
        <strain>N315</strain>
    </source>
</reference>
<protein>
    <recommendedName>
        <fullName evidence="1">Ribosomal RNA small subunit methyltransferase A</fullName>
        <ecNumber evidence="1">2.1.1.182</ecNumber>
    </recommendedName>
    <alternativeName>
        <fullName evidence="1">16S rRNA (adenine(1518)-N(6)/adenine(1519)-N(6))-dimethyltransferase</fullName>
    </alternativeName>
    <alternativeName>
        <fullName evidence="1">16S rRNA dimethyladenosine transferase</fullName>
    </alternativeName>
    <alternativeName>
        <fullName evidence="1">16S rRNA dimethylase</fullName>
    </alternativeName>
    <alternativeName>
        <fullName evidence="1">S-adenosylmethionine-6-N', N'-adenosyl(rRNA) dimethyltransferase</fullName>
    </alternativeName>
</protein>
<comment type="function">
    <text evidence="1">Specifically dimethylates two adjacent adenosines (A1518 and A1519) in the loop of a conserved hairpin near the 3'-end of 16S rRNA in the 30S particle. May play a critical role in biogenesis of 30S subunits.</text>
</comment>
<comment type="catalytic activity">
    <reaction evidence="1">
        <text>adenosine(1518)/adenosine(1519) in 16S rRNA + 4 S-adenosyl-L-methionine = N(6)-dimethyladenosine(1518)/N(6)-dimethyladenosine(1519) in 16S rRNA + 4 S-adenosyl-L-homocysteine + 4 H(+)</text>
        <dbReference type="Rhea" id="RHEA:19609"/>
        <dbReference type="Rhea" id="RHEA-COMP:10232"/>
        <dbReference type="Rhea" id="RHEA-COMP:10233"/>
        <dbReference type="ChEBI" id="CHEBI:15378"/>
        <dbReference type="ChEBI" id="CHEBI:57856"/>
        <dbReference type="ChEBI" id="CHEBI:59789"/>
        <dbReference type="ChEBI" id="CHEBI:74411"/>
        <dbReference type="ChEBI" id="CHEBI:74493"/>
        <dbReference type="EC" id="2.1.1.182"/>
    </reaction>
</comment>
<comment type="subcellular location">
    <subcellularLocation>
        <location evidence="1">Cytoplasm</location>
    </subcellularLocation>
</comment>
<comment type="similarity">
    <text evidence="1">Belongs to the class I-like SAM-binding methyltransferase superfamily. rRNA adenine N(6)-methyltransferase family. RsmA subfamily.</text>
</comment>